<accession>A2RH85</accession>
<keyword id="KW-0963">Cytoplasm</keyword>
<keyword id="KW-0378">Hydrolase</keyword>
<keyword id="KW-0694">RNA-binding</keyword>
<keyword id="KW-0820">tRNA-binding</keyword>
<name>PTH_LACLM</name>
<sequence length="188" mass="20963">MTKMIVGLGNPGDKYEKTKHNMGFMALDLLAKELNVDFKEEKPFMSLVASTFVNGEKLFLVKPLTFMNESGRAVAPLLKYYNIDEADLTVMHDDLDSPVGRVRLRQKGSSGGQNGIKSVITHVGSQTFNRVKIGIGRPKHGMTVVNHVLSGFDNEDKEIAQDGIFKAVDAMKFYLENGDFQKTMNKFN</sequence>
<gene>
    <name evidence="1" type="primary">pth</name>
    <name type="ordered locus">llmg_0012</name>
</gene>
<organism>
    <name type="scientific">Lactococcus lactis subsp. cremoris (strain MG1363)</name>
    <dbReference type="NCBI Taxonomy" id="416870"/>
    <lineage>
        <taxon>Bacteria</taxon>
        <taxon>Bacillati</taxon>
        <taxon>Bacillota</taxon>
        <taxon>Bacilli</taxon>
        <taxon>Lactobacillales</taxon>
        <taxon>Streptococcaceae</taxon>
        <taxon>Lactococcus</taxon>
        <taxon>Lactococcus cremoris subsp. cremoris</taxon>
    </lineage>
</organism>
<proteinExistence type="inferred from homology"/>
<evidence type="ECO:0000255" key="1">
    <source>
        <dbReference type="HAMAP-Rule" id="MF_00083"/>
    </source>
</evidence>
<dbReference type="EC" id="3.1.1.29" evidence="1"/>
<dbReference type="EMBL" id="AM406671">
    <property type="protein sequence ID" value="CAL96621.1"/>
    <property type="molecule type" value="Genomic_DNA"/>
</dbReference>
<dbReference type="RefSeq" id="WP_003132167.1">
    <property type="nucleotide sequence ID" value="NZ_WJVF01000016.1"/>
</dbReference>
<dbReference type="SMR" id="A2RH85"/>
<dbReference type="STRING" id="416870.llmg_0012"/>
<dbReference type="GeneID" id="89632181"/>
<dbReference type="KEGG" id="llm:llmg_0012"/>
<dbReference type="eggNOG" id="COG0193">
    <property type="taxonomic scope" value="Bacteria"/>
</dbReference>
<dbReference type="HOGENOM" id="CLU_062456_4_1_9"/>
<dbReference type="OrthoDB" id="9800507at2"/>
<dbReference type="PhylomeDB" id="A2RH85"/>
<dbReference type="Proteomes" id="UP000000364">
    <property type="component" value="Chromosome"/>
</dbReference>
<dbReference type="GO" id="GO:0005737">
    <property type="term" value="C:cytoplasm"/>
    <property type="evidence" value="ECO:0007669"/>
    <property type="project" value="UniProtKB-SubCell"/>
</dbReference>
<dbReference type="GO" id="GO:0004045">
    <property type="term" value="F:peptidyl-tRNA hydrolase activity"/>
    <property type="evidence" value="ECO:0007669"/>
    <property type="project" value="UniProtKB-UniRule"/>
</dbReference>
<dbReference type="GO" id="GO:0000049">
    <property type="term" value="F:tRNA binding"/>
    <property type="evidence" value="ECO:0007669"/>
    <property type="project" value="UniProtKB-UniRule"/>
</dbReference>
<dbReference type="GO" id="GO:0006515">
    <property type="term" value="P:protein quality control for misfolded or incompletely synthesized proteins"/>
    <property type="evidence" value="ECO:0007669"/>
    <property type="project" value="UniProtKB-UniRule"/>
</dbReference>
<dbReference type="GO" id="GO:0072344">
    <property type="term" value="P:rescue of stalled ribosome"/>
    <property type="evidence" value="ECO:0007669"/>
    <property type="project" value="UniProtKB-UniRule"/>
</dbReference>
<dbReference type="CDD" id="cd00462">
    <property type="entry name" value="PTH"/>
    <property type="match status" value="1"/>
</dbReference>
<dbReference type="FunFam" id="3.40.50.1470:FF:000001">
    <property type="entry name" value="Peptidyl-tRNA hydrolase"/>
    <property type="match status" value="1"/>
</dbReference>
<dbReference type="Gene3D" id="3.40.50.1470">
    <property type="entry name" value="Peptidyl-tRNA hydrolase"/>
    <property type="match status" value="1"/>
</dbReference>
<dbReference type="HAMAP" id="MF_00083">
    <property type="entry name" value="Pept_tRNA_hydro_bact"/>
    <property type="match status" value="1"/>
</dbReference>
<dbReference type="InterPro" id="IPR001328">
    <property type="entry name" value="Pept_tRNA_hydro"/>
</dbReference>
<dbReference type="InterPro" id="IPR018171">
    <property type="entry name" value="Pept_tRNA_hydro_CS"/>
</dbReference>
<dbReference type="InterPro" id="IPR036416">
    <property type="entry name" value="Pept_tRNA_hydro_sf"/>
</dbReference>
<dbReference type="NCBIfam" id="TIGR00447">
    <property type="entry name" value="pth"/>
    <property type="match status" value="1"/>
</dbReference>
<dbReference type="PANTHER" id="PTHR17224">
    <property type="entry name" value="PEPTIDYL-TRNA HYDROLASE"/>
    <property type="match status" value="1"/>
</dbReference>
<dbReference type="PANTHER" id="PTHR17224:SF1">
    <property type="entry name" value="PEPTIDYL-TRNA HYDROLASE"/>
    <property type="match status" value="1"/>
</dbReference>
<dbReference type="Pfam" id="PF01195">
    <property type="entry name" value="Pept_tRNA_hydro"/>
    <property type="match status" value="1"/>
</dbReference>
<dbReference type="SUPFAM" id="SSF53178">
    <property type="entry name" value="Peptidyl-tRNA hydrolase-like"/>
    <property type="match status" value="1"/>
</dbReference>
<dbReference type="PROSITE" id="PS01195">
    <property type="entry name" value="PEPT_TRNA_HYDROL_1"/>
    <property type="match status" value="1"/>
</dbReference>
<reference key="1">
    <citation type="journal article" date="2007" name="J. Bacteriol.">
        <title>The complete genome sequence of the lactic acid bacterial paradigm Lactococcus lactis subsp. cremoris MG1363.</title>
        <authorList>
            <person name="Wegmann U."/>
            <person name="O'Connell-Motherway M."/>
            <person name="Zomer A."/>
            <person name="Buist G."/>
            <person name="Shearman C."/>
            <person name="Canchaya C."/>
            <person name="Ventura M."/>
            <person name="Goesmann A."/>
            <person name="Gasson M.J."/>
            <person name="Kuipers O.P."/>
            <person name="van Sinderen D."/>
            <person name="Kok J."/>
        </authorList>
    </citation>
    <scope>NUCLEOTIDE SEQUENCE [LARGE SCALE GENOMIC DNA]</scope>
    <source>
        <strain>MG1363</strain>
    </source>
</reference>
<feature type="chain" id="PRO_1000010602" description="Peptidyl-tRNA hydrolase">
    <location>
        <begin position="1"/>
        <end position="188"/>
    </location>
</feature>
<feature type="active site" description="Proton acceptor" evidence="1">
    <location>
        <position position="20"/>
    </location>
</feature>
<feature type="binding site" evidence="1">
    <location>
        <position position="15"/>
    </location>
    <ligand>
        <name>tRNA</name>
        <dbReference type="ChEBI" id="CHEBI:17843"/>
    </ligand>
</feature>
<feature type="binding site" evidence="1">
    <location>
        <position position="66"/>
    </location>
    <ligand>
        <name>tRNA</name>
        <dbReference type="ChEBI" id="CHEBI:17843"/>
    </ligand>
</feature>
<feature type="binding site" evidence="1">
    <location>
        <position position="68"/>
    </location>
    <ligand>
        <name>tRNA</name>
        <dbReference type="ChEBI" id="CHEBI:17843"/>
    </ligand>
</feature>
<feature type="binding site" evidence="1">
    <location>
        <position position="114"/>
    </location>
    <ligand>
        <name>tRNA</name>
        <dbReference type="ChEBI" id="CHEBI:17843"/>
    </ligand>
</feature>
<feature type="site" description="Discriminates between blocked and unblocked aminoacyl-tRNA" evidence="1">
    <location>
        <position position="10"/>
    </location>
</feature>
<feature type="site" description="Stabilizes the basic form of H active site to accept a proton" evidence="1">
    <location>
        <position position="93"/>
    </location>
</feature>
<comment type="function">
    <text evidence="1">Hydrolyzes ribosome-free peptidyl-tRNAs (with 1 or more amino acids incorporated), which drop off the ribosome during protein synthesis, or as a result of ribosome stalling.</text>
</comment>
<comment type="function">
    <text evidence="1">Catalyzes the release of premature peptidyl moieties from peptidyl-tRNA molecules trapped in stalled 50S ribosomal subunits, and thus maintains levels of free tRNAs and 50S ribosomes.</text>
</comment>
<comment type="catalytic activity">
    <reaction evidence="1">
        <text>an N-acyl-L-alpha-aminoacyl-tRNA + H2O = an N-acyl-L-amino acid + a tRNA + H(+)</text>
        <dbReference type="Rhea" id="RHEA:54448"/>
        <dbReference type="Rhea" id="RHEA-COMP:10123"/>
        <dbReference type="Rhea" id="RHEA-COMP:13883"/>
        <dbReference type="ChEBI" id="CHEBI:15377"/>
        <dbReference type="ChEBI" id="CHEBI:15378"/>
        <dbReference type="ChEBI" id="CHEBI:59874"/>
        <dbReference type="ChEBI" id="CHEBI:78442"/>
        <dbReference type="ChEBI" id="CHEBI:138191"/>
        <dbReference type="EC" id="3.1.1.29"/>
    </reaction>
</comment>
<comment type="subunit">
    <text evidence="1">Monomer.</text>
</comment>
<comment type="subcellular location">
    <subcellularLocation>
        <location evidence="1">Cytoplasm</location>
    </subcellularLocation>
</comment>
<comment type="similarity">
    <text evidence="1">Belongs to the PTH family.</text>
</comment>
<protein>
    <recommendedName>
        <fullName evidence="1">Peptidyl-tRNA hydrolase</fullName>
        <shortName evidence="1">Pth</shortName>
        <ecNumber evidence="1">3.1.1.29</ecNumber>
    </recommendedName>
</protein>